<sequence length="438" mass="47796">MPGMPNPTQELKGKIPPHNLEAERAVLGAVLLDDSALSTATEQLSASSFYSAAHQRIFQALVELSDLGQRPDILVLSEHLRSCEALDFVGGSAYVASLTDAVPSAANVEYYTRIVCDAAMRRSLLKVARIITAEAFNDTVSGNIVLETAQREIYDLTNARRVATFKLLKNLIPDLVNTIETRYRNQSDLVGIATGLTALDNLTGGFQNSELIVIGARPSMGKTALAMTMASNIAIRQRIPTAFFSLEMSNLLLMQRLIAAESGVSATNLRKGLLQLSDFGRIQNAAGEMYDAPLYIVDVPNMKLLDLRAVARRLCVQEKIQIIFVDYLGLIVADNPFAPRYEQFAAISQSLKSLARELDIPIVALSQVGRPAEGSAPNLADIRGSGAIEQDADVVMFLHRDRNETETQLILAKQRNGPIGTVELEFQASFTRFVCKSP</sequence>
<accession>O83097</accession>
<comment type="function">
    <text evidence="1">The main replicative DNA helicase, it participates in initiation and elongation during chromosome replication. Travels ahead of the DNA replisome, separating dsDNA into templates for DNA synthesis. A processive ATP-dependent 5'-3' DNA helicase it has DNA-dependent ATPase activity.</text>
</comment>
<comment type="catalytic activity">
    <reaction evidence="1">
        <text>Couples ATP hydrolysis with the unwinding of duplex DNA at the replication fork by translocating in the 5'-3' direction. This creates two antiparallel DNA single strands (ssDNA). The leading ssDNA polymer is the template for DNA polymerase III holoenzyme which synthesizes a continuous strand.</text>
        <dbReference type="EC" id="5.6.2.3"/>
    </reaction>
</comment>
<comment type="catalytic activity">
    <reaction evidence="1">
        <text>ATP + H2O = ADP + phosphate + H(+)</text>
        <dbReference type="Rhea" id="RHEA:13065"/>
        <dbReference type="ChEBI" id="CHEBI:15377"/>
        <dbReference type="ChEBI" id="CHEBI:15378"/>
        <dbReference type="ChEBI" id="CHEBI:30616"/>
        <dbReference type="ChEBI" id="CHEBI:43474"/>
        <dbReference type="ChEBI" id="CHEBI:456216"/>
        <dbReference type="EC" id="5.6.2.3"/>
    </reaction>
</comment>
<comment type="subunit">
    <text evidence="1">Homohexamer.</text>
</comment>
<comment type="interaction">
    <interactant intactId="EBI-1582320">
        <id>O83097</id>
    </interactant>
    <interactant intactId="EBI-1582316">
        <id>O83047</id>
        <label>dnaA</label>
    </interactant>
    <organismsDiffer>false</organismsDiffer>
    <experiments>2</experiments>
</comment>
<comment type="interaction">
    <interactant intactId="EBI-1582320">
        <id>O83097</id>
    </interactant>
    <interactant intactId="EBI-1582351">
        <id>O83970</id>
        <label>dnaX</label>
    </interactant>
    <organismsDiffer>false</organismsDiffer>
    <experiments>2</experiments>
</comment>
<comment type="interaction">
    <interactant intactId="EBI-1582320">
        <id>O83097</id>
    </interactant>
    <interactant intactId="EBI-1198251">
        <id>O83089</id>
        <label>TP_0050</label>
    </interactant>
    <organismsDiffer>false</organismsDiffer>
    <experiments>2</experiments>
</comment>
<comment type="interaction">
    <interactant intactId="EBI-1582320">
        <id>O83097</id>
    </interactant>
    <interactant intactId="EBI-1198269">
        <id>O83130</id>
        <label>TP_0092</label>
    </interactant>
    <organismsDiffer>false</organismsDiffer>
    <experiments>2</experiments>
</comment>
<comment type="similarity">
    <text evidence="3">Belongs to the helicase family. DnaB subfamily.</text>
</comment>
<proteinExistence type="evidence at protein level"/>
<protein>
    <recommendedName>
        <fullName>Replicative DNA helicase DnaB</fullName>
        <ecNumber evidence="1">5.6.2.3</ecNumber>
    </recommendedName>
    <alternativeName>
        <fullName evidence="3">DNA 5'-3' helicase DnaB</fullName>
    </alternativeName>
</protein>
<organism>
    <name type="scientific">Treponema pallidum (strain Nichols)</name>
    <dbReference type="NCBI Taxonomy" id="243276"/>
    <lineage>
        <taxon>Bacteria</taxon>
        <taxon>Pseudomonadati</taxon>
        <taxon>Spirochaetota</taxon>
        <taxon>Spirochaetia</taxon>
        <taxon>Spirochaetales</taxon>
        <taxon>Treponemataceae</taxon>
        <taxon>Treponema</taxon>
    </lineage>
</organism>
<evidence type="ECO:0000250" key="1">
    <source>
        <dbReference type="UniProtKB" id="P0ACB0"/>
    </source>
</evidence>
<evidence type="ECO:0000255" key="2">
    <source>
        <dbReference type="PROSITE-ProRule" id="PRU00596"/>
    </source>
</evidence>
<evidence type="ECO:0000305" key="3"/>
<name>DNAB_TREPA</name>
<dbReference type="EC" id="5.6.2.3" evidence="1"/>
<dbReference type="EMBL" id="AE000520">
    <property type="protein sequence ID" value="AAC65054.1"/>
    <property type="molecule type" value="Genomic_DNA"/>
</dbReference>
<dbReference type="PIR" id="B71370">
    <property type="entry name" value="B71370"/>
</dbReference>
<dbReference type="SMR" id="O83097"/>
<dbReference type="IntAct" id="O83097">
    <property type="interactions" value="19"/>
</dbReference>
<dbReference type="STRING" id="243276.TP_0058"/>
<dbReference type="EnsemblBacteria" id="AAC65054">
    <property type="protein sequence ID" value="AAC65054"/>
    <property type="gene ID" value="TP_0058"/>
</dbReference>
<dbReference type="KEGG" id="tpa:TP_0058"/>
<dbReference type="KEGG" id="tpw:TPANIC_0058"/>
<dbReference type="eggNOG" id="COG0305">
    <property type="taxonomic scope" value="Bacteria"/>
</dbReference>
<dbReference type="HOGENOM" id="CLU_005373_0_2_12"/>
<dbReference type="OrthoDB" id="9773982at2"/>
<dbReference type="Proteomes" id="UP000000811">
    <property type="component" value="Chromosome"/>
</dbReference>
<dbReference type="GO" id="GO:0005829">
    <property type="term" value="C:cytosol"/>
    <property type="evidence" value="ECO:0007669"/>
    <property type="project" value="TreeGrafter"/>
</dbReference>
<dbReference type="GO" id="GO:1990077">
    <property type="term" value="C:primosome complex"/>
    <property type="evidence" value="ECO:0007669"/>
    <property type="project" value="UniProtKB-KW"/>
</dbReference>
<dbReference type="GO" id="GO:0005524">
    <property type="term" value="F:ATP binding"/>
    <property type="evidence" value="ECO:0007669"/>
    <property type="project" value="UniProtKB-KW"/>
</dbReference>
<dbReference type="GO" id="GO:0016887">
    <property type="term" value="F:ATP hydrolysis activity"/>
    <property type="evidence" value="ECO:0007669"/>
    <property type="project" value="RHEA"/>
</dbReference>
<dbReference type="GO" id="GO:0003677">
    <property type="term" value="F:DNA binding"/>
    <property type="evidence" value="ECO:0007669"/>
    <property type="project" value="UniProtKB-KW"/>
</dbReference>
<dbReference type="GO" id="GO:0003678">
    <property type="term" value="F:DNA helicase activity"/>
    <property type="evidence" value="ECO:0007669"/>
    <property type="project" value="InterPro"/>
</dbReference>
<dbReference type="GO" id="GO:0006269">
    <property type="term" value="P:DNA replication, synthesis of primer"/>
    <property type="evidence" value="ECO:0007669"/>
    <property type="project" value="UniProtKB-KW"/>
</dbReference>
<dbReference type="CDD" id="cd00984">
    <property type="entry name" value="DnaB_C"/>
    <property type="match status" value="1"/>
</dbReference>
<dbReference type="FunFam" id="1.10.860.10:FF:000001">
    <property type="entry name" value="Replicative DNA helicase"/>
    <property type="match status" value="1"/>
</dbReference>
<dbReference type="Gene3D" id="1.10.860.10">
    <property type="entry name" value="DNAb Helicase, Chain A"/>
    <property type="match status" value="1"/>
</dbReference>
<dbReference type="Gene3D" id="3.40.50.300">
    <property type="entry name" value="P-loop containing nucleotide triphosphate hydrolases"/>
    <property type="match status" value="1"/>
</dbReference>
<dbReference type="InterPro" id="IPR036185">
    <property type="entry name" value="DNA_heli_DnaB-like_N_sf"/>
</dbReference>
<dbReference type="InterPro" id="IPR007692">
    <property type="entry name" value="DNA_helicase_DnaB"/>
</dbReference>
<dbReference type="InterPro" id="IPR007694">
    <property type="entry name" value="DNA_helicase_DnaB-like_C"/>
</dbReference>
<dbReference type="InterPro" id="IPR007693">
    <property type="entry name" value="DNA_helicase_DnaB-like_N"/>
</dbReference>
<dbReference type="InterPro" id="IPR016136">
    <property type="entry name" value="DNA_helicase_N/primase_C"/>
</dbReference>
<dbReference type="InterPro" id="IPR027417">
    <property type="entry name" value="P-loop_NTPase"/>
</dbReference>
<dbReference type="NCBIfam" id="TIGR00665">
    <property type="entry name" value="DnaB"/>
    <property type="match status" value="1"/>
</dbReference>
<dbReference type="PANTHER" id="PTHR30153:SF2">
    <property type="entry name" value="REPLICATIVE DNA HELICASE"/>
    <property type="match status" value="1"/>
</dbReference>
<dbReference type="PANTHER" id="PTHR30153">
    <property type="entry name" value="REPLICATIVE DNA HELICASE DNAB"/>
    <property type="match status" value="1"/>
</dbReference>
<dbReference type="Pfam" id="PF00772">
    <property type="entry name" value="DnaB"/>
    <property type="match status" value="1"/>
</dbReference>
<dbReference type="Pfam" id="PF03796">
    <property type="entry name" value="DnaB_C"/>
    <property type="match status" value="1"/>
</dbReference>
<dbReference type="SUPFAM" id="SSF48024">
    <property type="entry name" value="N-terminal domain of DnaB helicase"/>
    <property type="match status" value="1"/>
</dbReference>
<dbReference type="SUPFAM" id="SSF52540">
    <property type="entry name" value="P-loop containing nucleoside triphosphate hydrolases"/>
    <property type="match status" value="1"/>
</dbReference>
<dbReference type="PROSITE" id="PS51199">
    <property type="entry name" value="SF4_HELICASE"/>
    <property type="match status" value="1"/>
</dbReference>
<reference key="1">
    <citation type="journal article" date="1998" name="Science">
        <title>Complete genome sequence of Treponema pallidum, the syphilis spirochete.</title>
        <authorList>
            <person name="Fraser C.M."/>
            <person name="Norris S.J."/>
            <person name="Weinstock G.M."/>
            <person name="White O."/>
            <person name="Sutton G.G."/>
            <person name="Dodson R.J."/>
            <person name="Gwinn M.L."/>
            <person name="Hickey E.K."/>
            <person name="Clayton R.A."/>
            <person name="Ketchum K.A."/>
            <person name="Sodergren E."/>
            <person name="Hardham J.M."/>
            <person name="McLeod M.P."/>
            <person name="Salzberg S.L."/>
            <person name="Peterson J.D."/>
            <person name="Khalak H.G."/>
            <person name="Richardson D.L."/>
            <person name="Howell J.K."/>
            <person name="Chidambaram M."/>
            <person name="Utterback T.R."/>
            <person name="McDonald L.A."/>
            <person name="Artiach P."/>
            <person name="Bowman C."/>
            <person name="Cotton M.D."/>
            <person name="Fujii C."/>
            <person name="Garland S.A."/>
            <person name="Hatch B."/>
            <person name="Horst K."/>
            <person name="Roberts K.M."/>
            <person name="Sandusky M."/>
            <person name="Weidman J.F."/>
            <person name="Smith H.O."/>
            <person name="Venter J.C."/>
        </authorList>
    </citation>
    <scope>NUCLEOTIDE SEQUENCE [LARGE SCALE GENOMIC DNA]</scope>
    <source>
        <strain>Nichols</strain>
    </source>
</reference>
<feature type="chain" id="PRO_0000102033" description="Replicative DNA helicase DnaB">
    <location>
        <begin position="1"/>
        <end position="438"/>
    </location>
</feature>
<feature type="domain" description="SF4 helicase" evidence="2">
    <location>
        <begin position="185"/>
        <end position="438"/>
    </location>
</feature>
<feature type="binding site" evidence="2">
    <location>
        <begin position="216"/>
        <end position="223"/>
    </location>
    <ligand>
        <name>ATP</name>
        <dbReference type="ChEBI" id="CHEBI:30616"/>
    </ligand>
</feature>
<keyword id="KW-0067">ATP-binding</keyword>
<keyword id="KW-0235">DNA replication</keyword>
<keyword id="KW-0238">DNA-binding</keyword>
<keyword id="KW-0347">Helicase</keyword>
<keyword id="KW-0378">Hydrolase</keyword>
<keyword id="KW-0413">Isomerase</keyword>
<keyword id="KW-0547">Nucleotide-binding</keyword>
<keyword id="KW-0639">Primosome</keyword>
<keyword id="KW-1185">Reference proteome</keyword>
<gene>
    <name type="primary">dnaB</name>
    <name type="ordered locus">TP_0058</name>
</gene>